<organism>
    <name type="scientific">Caenorhabditis elegans</name>
    <dbReference type="NCBI Taxonomy" id="6239"/>
    <lineage>
        <taxon>Eukaryota</taxon>
        <taxon>Metazoa</taxon>
        <taxon>Ecdysozoa</taxon>
        <taxon>Nematoda</taxon>
        <taxon>Chromadorea</taxon>
        <taxon>Rhabditida</taxon>
        <taxon>Rhabditina</taxon>
        <taxon>Rhabditomorpha</taxon>
        <taxon>Rhabditoidea</taxon>
        <taxon>Rhabditidae</taxon>
        <taxon>Peloderinae</taxon>
        <taxon>Caenorhabditis</taxon>
    </lineage>
</organism>
<sequence length="161" mass="18551">MSKQQEQDTPSFGEIRQRLQAGEDFDLAHRLQEREYEMYYNHNRNVNGTIVGDRKKTREEQIAEDEHAASLRRLGHAERSMSDEEYARQLQEEMDRLDASIQMDKEAQLREDARMAWLLQQESSATPAPSRHSGDLISFEDQPQQSSNTTTSSSCQSANNS</sequence>
<dbReference type="EMBL" id="FO080701">
    <property type="protein sequence ID" value="CCD65948.1"/>
    <property type="molecule type" value="Genomic_DNA"/>
</dbReference>
<dbReference type="RefSeq" id="NP_495568.3">
    <property type="nucleotide sequence ID" value="NM_063167.10"/>
</dbReference>
<dbReference type="SMR" id="Q10043"/>
<dbReference type="FunCoup" id="Q10043">
    <property type="interactions" value="6"/>
</dbReference>
<dbReference type="STRING" id="6239.R10H1.1.1"/>
<dbReference type="PaxDb" id="6239-R10H1.1"/>
<dbReference type="PeptideAtlas" id="Q10043"/>
<dbReference type="EnsemblMetazoa" id="R10H1.1.1">
    <property type="protein sequence ID" value="R10H1.1.1"/>
    <property type="gene ID" value="WBGene00019998"/>
</dbReference>
<dbReference type="GeneID" id="259445"/>
<dbReference type="KEGG" id="cel:CELE_R10H1.1"/>
<dbReference type="UCSC" id="R10H1.1">
    <property type="organism name" value="c. elegans"/>
</dbReference>
<dbReference type="AGR" id="WB:WBGene00019998"/>
<dbReference type="CTD" id="259445"/>
<dbReference type="WormBase" id="R10H1.1">
    <property type="protein sequence ID" value="CE31820"/>
    <property type="gene ID" value="WBGene00019998"/>
</dbReference>
<dbReference type="eggNOG" id="ENOG502QW6C">
    <property type="taxonomic scope" value="Eukaryota"/>
</dbReference>
<dbReference type="GeneTree" id="ENSGT00390000011058"/>
<dbReference type="HOGENOM" id="CLU_079719_0_0_1"/>
<dbReference type="InParanoid" id="Q10043"/>
<dbReference type="OMA" id="QIAEDEH"/>
<dbReference type="OrthoDB" id="5877310at2759"/>
<dbReference type="PhylomeDB" id="Q10043"/>
<dbReference type="PRO" id="PR:Q10043"/>
<dbReference type="Proteomes" id="UP000001940">
    <property type="component" value="Chromosome II"/>
</dbReference>
<dbReference type="Bgee" id="WBGene00019998">
    <property type="expression patterns" value="Expressed in larva and 3 other cell types or tissues"/>
</dbReference>
<dbReference type="InterPro" id="IPR039303">
    <property type="entry name" value="CCDC50"/>
</dbReference>
<dbReference type="InterPro" id="IPR029311">
    <property type="entry name" value="CCDC50_N"/>
</dbReference>
<dbReference type="PANTHER" id="PTHR22115">
    <property type="entry name" value="C3ORF6 PROTEIN-RELATED"/>
    <property type="match status" value="1"/>
</dbReference>
<dbReference type="PANTHER" id="PTHR22115:SF4">
    <property type="entry name" value="COILED-COIL DOMAIN-CONTAINING PROTEIN"/>
    <property type="match status" value="1"/>
</dbReference>
<dbReference type="Pfam" id="PF15295">
    <property type="entry name" value="CCDC50_N"/>
    <property type="match status" value="1"/>
</dbReference>
<accession>Q10043</accession>
<evidence type="ECO:0000255" key="1"/>
<evidence type="ECO:0000256" key="2">
    <source>
        <dbReference type="SAM" id="MobiDB-lite"/>
    </source>
</evidence>
<reference key="1">
    <citation type="journal article" date="1998" name="Science">
        <title>Genome sequence of the nematode C. elegans: a platform for investigating biology.</title>
        <authorList>
            <consortium name="The C. elegans sequencing consortium"/>
        </authorList>
    </citation>
    <scope>NUCLEOTIDE SEQUENCE [LARGE SCALE GENOMIC DNA]</scope>
    <source>
        <strain>Bristol N2</strain>
    </source>
</reference>
<keyword id="KW-0175">Coiled coil</keyword>
<keyword id="KW-1185">Reference proteome</keyword>
<protein>
    <recommendedName>
        <fullName>Uncharacterized protein R10H1.1</fullName>
    </recommendedName>
</protein>
<proteinExistence type="predicted"/>
<gene>
    <name type="ORF">R10H1.1</name>
</gene>
<feature type="chain" id="PRO_0000065436" description="Uncharacterized protein R10H1.1">
    <location>
        <begin position="1"/>
        <end position="161"/>
    </location>
</feature>
<feature type="region of interest" description="Disordered" evidence="2">
    <location>
        <begin position="1"/>
        <end position="20"/>
    </location>
</feature>
<feature type="region of interest" description="Disordered" evidence="2">
    <location>
        <begin position="55"/>
        <end position="84"/>
    </location>
</feature>
<feature type="region of interest" description="Disordered" evidence="2">
    <location>
        <begin position="118"/>
        <end position="161"/>
    </location>
</feature>
<feature type="coiled-coil region" evidence="1">
    <location>
        <begin position="82"/>
        <end position="107"/>
    </location>
</feature>
<feature type="compositionally biased region" description="Polar residues" evidence="2">
    <location>
        <begin position="1"/>
        <end position="10"/>
    </location>
</feature>
<feature type="compositionally biased region" description="Low complexity" evidence="2">
    <location>
        <begin position="144"/>
        <end position="161"/>
    </location>
</feature>
<name>YRP1_CAEEL</name>